<protein>
    <recommendedName>
        <fullName evidence="1">Cell division protein SepF</fullName>
    </recommendedName>
</protein>
<dbReference type="EMBL" id="CP000410">
    <property type="protein sequence ID" value="ABJ53822.1"/>
    <property type="molecule type" value="Genomic_DNA"/>
</dbReference>
<dbReference type="RefSeq" id="WP_000053385.1">
    <property type="nucleotide sequence ID" value="NZ_JAMLJR010000013.1"/>
</dbReference>
<dbReference type="SMR" id="Q04JA5"/>
<dbReference type="PaxDb" id="373153-SPD_1477"/>
<dbReference type="KEGG" id="spd:SPD_1477"/>
<dbReference type="eggNOG" id="COG1799">
    <property type="taxonomic scope" value="Bacteria"/>
</dbReference>
<dbReference type="HOGENOM" id="CLU_078499_2_0_9"/>
<dbReference type="BioCyc" id="SPNE373153:G1G6V-1593-MONOMER"/>
<dbReference type="Proteomes" id="UP000001452">
    <property type="component" value="Chromosome"/>
</dbReference>
<dbReference type="GO" id="GO:0005737">
    <property type="term" value="C:cytoplasm"/>
    <property type="evidence" value="ECO:0007669"/>
    <property type="project" value="UniProtKB-SubCell"/>
</dbReference>
<dbReference type="GO" id="GO:0000917">
    <property type="term" value="P:division septum assembly"/>
    <property type="evidence" value="ECO:0007669"/>
    <property type="project" value="UniProtKB-KW"/>
</dbReference>
<dbReference type="GO" id="GO:0043093">
    <property type="term" value="P:FtsZ-dependent cytokinesis"/>
    <property type="evidence" value="ECO:0007669"/>
    <property type="project" value="UniProtKB-UniRule"/>
</dbReference>
<dbReference type="Gene3D" id="3.30.110.150">
    <property type="entry name" value="SepF-like protein"/>
    <property type="match status" value="1"/>
</dbReference>
<dbReference type="HAMAP" id="MF_01197">
    <property type="entry name" value="SepF"/>
    <property type="match status" value="1"/>
</dbReference>
<dbReference type="InterPro" id="IPR023052">
    <property type="entry name" value="Cell_div_SepF"/>
</dbReference>
<dbReference type="InterPro" id="IPR007561">
    <property type="entry name" value="Cell_div_SepF/SepF-rel"/>
</dbReference>
<dbReference type="InterPro" id="IPR038594">
    <property type="entry name" value="SepF-like_sf"/>
</dbReference>
<dbReference type="PANTHER" id="PTHR35798">
    <property type="entry name" value="CELL DIVISION PROTEIN SEPF"/>
    <property type="match status" value="1"/>
</dbReference>
<dbReference type="PANTHER" id="PTHR35798:SF1">
    <property type="entry name" value="CELL DIVISION PROTEIN SEPF"/>
    <property type="match status" value="1"/>
</dbReference>
<dbReference type="Pfam" id="PF04472">
    <property type="entry name" value="SepF"/>
    <property type="match status" value="1"/>
</dbReference>
<evidence type="ECO:0000255" key="1">
    <source>
        <dbReference type="HAMAP-Rule" id="MF_01197"/>
    </source>
</evidence>
<evidence type="ECO:0000256" key="2">
    <source>
        <dbReference type="SAM" id="MobiDB-lite"/>
    </source>
</evidence>
<proteinExistence type="inferred from homology"/>
<gene>
    <name evidence="1" type="primary">sepF</name>
    <name type="ordered locus">SPD_1477</name>
</gene>
<organism>
    <name type="scientific">Streptococcus pneumoniae serotype 2 (strain D39 / NCTC 7466)</name>
    <dbReference type="NCBI Taxonomy" id="373153"/>
    <lineage>
        <taxon>Bacteria</taxon>
        <taxon>Bacillati</taxon>
        <taxon>Bacillota</taxon>
        <taxon>Bacilli</taxon>
        <taxon>Lactobacillales</taxon>
        <taxon>Streptococcaceae</taxon>
        <taxon>Streptococcus</taxon>
    </lineage>
</organism>
<reference key="1">
    <citation type="journal article" date="2007" name="J. Bacteriol.">
        <title>Genome sequence of Avery's virulent serotype 2 strain D39 of Streptococcus pneumoniae and comparison with that of unencapsulated laboratory strain R6.</title>
        <authorList>
            <person name="Lanie J.A."/>
            <person name="Ng W.-L."/>
            <person name="Kazmierczak K.M."/>
            <person name="Andrzejewski T.M."/>
            <person name="Davidsen T.M."/>
            <person name="Wayne K.J."/>
            <person name="Tettelin H."/>
            <person name="Glass J.I."/>
            <person name="Winkler M.E."/>
        </authorList>
    </citation>
    <scope>NUCLEOTIDE SEQUENCE [LARGE SCALE GENOMIC DNA]</scope>
    <source>
        <strain>D39 / NCTC 7466</strain>
    </source>
</reference>
<feature type="chain" id="PRO_0000334098" description="Cell division protein SepF">
    <location>
        <begin position="1"/>
        <end position="179"/>
    </location>
</feature>
<feature type="region of interest" description="Disordered" evidence="2">
    <location>
        <begin position="18"/>
        <end position="55"/>
    </location>
</feature>
<feature type="compositionally biased region" description="Polar residues" evidence="2">
    <location>
        <begin position="34"/>
        <end position="55"/>
    </location>
</feature>
<keyword id="KW-0131">Cell cycle</keyword>
<keyword id="KW-0132">Cell division</keyword>
<keyword id="KW-0963">Cytoplasm</keyword>
<keyword id="KW-1185">Reference proteome</keyword>
<keyword id="KW-0717">Septation</keyword>
<name>SEPF_STRP2</name>
<sequence length="179" mass="20637">MSLKDRFDRFIDYFTEDEDSSLPYEKRDEPVFTPVNSSQEPALPMNQPSQSAGTKENNITRLHARQQELANQSQRATDKVIIDVRYPRKYEDATEIVDLLAGNESILIDFQYMTEVQARRCLDYLDGACHVLAGNLKKVASTMYLLTPVNVIVNVEDIRLPDEDQQGEFGFDMKRNRVR</sequence>
<accession>Q04JA5</accession>
<comment type="function">
    <text evidence="1">Cell division protein that is part of the divisome complex and is recruited early to the Z-ring. Probably stimulates Z-ring formation, perhaps through the cross-linking of FtsZ protofilaments. Its function overlaps with FtsA.</text>
</comment>
<comment type="subunit">
    <text evidence="1">Homodimer. Interacts with FtsZ.</text>
</comment>
<comment type="subcellular location">
    <subcellularLocation>
        <location evidence="1">Cytoplasm</location>
    </subcellularLocation>
    <text evidence="1">Localizes to the division site, in a FtsZ-dependent manner.</text>
</comment>
<comment type="similarity">
    <text evidence="1">Belongs to the SepF family.</text>
</comment>